<comment type="function">
    <text evidence="1">Peptidoglycan polymerase that catalyzes glycan chain elongation from lipid-linked precursors.</text>
</comment>
<comment type="catalytic activity">
    <reaction evidence="1">
        <text>[GlcNAc-(1-&gt;4)-Mur2Ac(oyl-L-Ala-gamma-D-Glu-L-Lys-D-Ala-D-Ala)](n)-di-trans,octa-cis-undecaprenyl diphosphate + beta-D-GlcNAc-(1-&gt;4)-Mur2Ac(oyl-L-Ala-gamma-D-Glu-L-Lys-D-Ala-D-Ala)-di-trans,octa-cis-undecaprenyl diphosphate = [GlcNAc-(1-&gt;4)-Mur2Ac(oyl-L-Ala-gamma-D-Glu-L-Lys-D-Ala-D-Ala)](n+1)-di-trans,octa-cis-undecaprenyl diphosphate + di-trans,octa-cis-undecaprenyl diphosphate + H(+)</text>
        <dbReference type="Rhea" id="RHEA:23708"/>
        <dbReference type="Rhea" id="RHEA-COMP:9602"/>
        <dbReference type="Rhea" id="RHEA-COMP:9603"/>
        <dbReference type="ChEBI" id="CHEBI:15378"/>
        <dbReference type="ChEBI" id="CHEBI:58405"/>
        <dbReference type="ChEBI" id="CHEBI:60033"/>
        <dbReference type="ChEBI" id="CHEBI:78435"/>
        <dbReference type="EC" id="2.4.99.28"/>
    </reaction>
</comment>
<comment type="pathway">
    <text evidence="1">Cell wall biogenesis; peptidoglycan biosynthesis.</text>
</comment>
<comment type="subcellular location">
    <subcellularLocation>
        <location evidence="1">Cell inner membrane</location>
        <topology evidence="1">Single-pass membrane protein</topology>
    </subcellularLocation>
</comment>
<comment type="similarity">
    <text evidence="1">Belongs to the glycosyltransferase 51 family.</text>
</comment>
<keyword id="KW-0997">Cell inner membrane</keyword>
<keyword id="KW-1003">Cell membrane</keyword>
<keyword id="KW-0133">Cell shape</keyword>
<keyword id="KW-0961">Cell wall biogenesis/degradation</keyword>
<keyword id="KW-0328">Glycosyltransferase</keyword>
<keyword id="KW-0472">Membrane</keyword>
<keyword id="KW-0573">Peptidoglycan synthesis</keyword>
<keyword id="KW-0808">Transferase</keyword>
<keyword id="KW-0812">Transmembrane</keyword>
<keyword id="KW-1133">Transmembrane helix</keyword>
<name>MTGA_ECOUT</name>
<sequence length="242" mass="27340">MSKSRLTVFSFVRRFLLRLMVVLAIFWGGGIALFSVAPVPFSAVMVERQVSAWLHGNFRYVAHSDWVSMDQISPWMGLAVIAAEDQKFPEHWGFDVASIEQALAHNERNENRIRGASTISQQTAKNLFLWDGRSWVRKGLEAGLTLGIETVWSKKRILTVYLNIAEFGDGVFGVEAAAQRYFHKPASKLTRSEAALLAAVLPNPLRFKVSAPSGYVRSRQAWILRQMYQLGGEPFMQQHQLD</sequence>
<organism>
    <name type="scientific">Escherichia coli (strain UTI89 / UPEC)</name>
    <dbReference type="NCBI Taxonomy" id="364106"/>
    <lineage>
        <taxon>Bacteria</taxon>
        <taxon>Pseudomonadati</taxon>
        <taxon>Pseudomonadota</taxon>
        <taxon>Gammaproteobacteria</taxon>
        <taxon>Enterobacterales</taxon>
        <taxon>Enterobacteriaceae</taxon>
        <taxon>Escherichia</taxon>
    </lineage>
</organism>
<feature type="chain" id="PRO_0000257669" description="Biosynthetic peptidoglycan transglycosylase">
    <location>
        <begin position="1"/>
        <end position="242"/>
    </location>
</feature>
<feature type="transmembrane region" description="Helical" evidence="1">
    <location>
        <begin position="19"/>
        <end position="39"/>
    </location>
</feature>
<gene>
    <name evidence="1" type="primary">mtgA</name>
    <name type="ordered locus">UTI89_C3644</name>
</gene>
<evidence type="ECO:0000255" key="1">
    <source>
        <dbReference type="HAMAP-Rule" id="MF_00766"/>
    </source>
</evidence>
<proteinExistence type="inferred from homology"/>
<dbReference type="EC" id="2.4.99.28" evidence="1"/>
<dbReference type="EMBL" id="CP000243">
    <property type="protein sequence ID" value="ABE09088.1"/>
    <property type="molecule type" value="Genomic_DNA"/>
</dbReference>
<dbReference type="RefSeq" id="WP_000047069.1">
    <property type="nucleotide sequence ID" value="NZ_CP064825.1"/>
</dbReference>
<dbReference type="SMR" id="Q1R6C6"/>
<dbReference type="CAZy" id="GT51">
    <property type="family name" value="Glycosyltransferase Family 51"/>
</dbReference>
<dbReference type="KEGG" id="eci:UTI89_C3644"/>
<dbReference type="HOGENOM" id="CLU_006354_1_1_6"/>
<dbReference type="UniPathway" id="UPA00219"/>
<dbReference type="Proteomes" id="UP000001952">
    <property type="component" value="Chromosome"/>
</dbReference>
<dbReference type="GO" id="GO:0009274">
    <property type="term" value="C:peptidoglycan-based cell wall"/>
    <property type="evidence" value="ECO:0007669"/>
    <property type="project" value="InterPro"/>
</dbReference>
<dbReference type="GO" id="GO:0005886">
    <property type="term" value="C:plasma membrane"/>
    <property type="evidence" value="ECO:0007669"/>
    <property type="project" value="UniProtKB-SubCell"/>
</dbReference>
<dbReference type="GO" id="GO:0016763">
    <property type="term" value="F:pentosyltransferase activity"/>
    <property type="evidence" value="ECO:0007669"/>
    <property type="project" value="InterPro"/>
</dbReference>
<dbReference type="GO" id="GO:0008955">
    <property type="term" value="F:peptidoglycan glycosyltransferase activity"/>
    <property type="evidence" value="ECO:0007669"/>
    <property type="project" value="UniProtKB-UniRule"/>
</dbReference>
<dbReference type="GO" id="GO:0071555">
    <property type="term" value="P:cell wall organization"/>
    <property type="evidence" value="ECO:0007669"/>
    <property type="project" value="UniProtKB-KW"/>
</dbReference>
<dbReference type="GO" id="GO:0009252">
    <property type="term" value="P:peptidoglycan biosynthetic process"/>
    <property type="evidence" value="ECO:0007669"/>
    <property type="project" value="UniProtKB-UniRule"/>
</dbReference>
<dbReference type="GO" id="GO:0008360">
    <property type="term" value="P:regulation of cell shape"/>
    <property type="evidence" value="ECO:0007669"/>
    <property type="project" value="UniProtKB-KW"/>
</dbReference>
<dbReference type="FunFam" id="1.10.3810.10:FF:000004">
    <property type="entry name" value="Biosynthetic peptidoglycan transglycosylase"/>
    <property type="match status" value="1"/>
</dbReference>
<dbReference type="Gene3D" id="1.10.3810.10">
    <property type="entry name" value="Biosynthetic peptidoglycan transglycosylase-like"/>
    <property type="match status" value="1"/>
</dbReference>
<dbReference type="HAMAP" id="MF_00766">
    <property type="entry name" value="PGT_MtgA"/>
    <property type="match status" value="1"/>
</dbReference>
<dbReference type="InterPro" id="IPR001264">
    <property type="entry name" value="Glyco_trans_51"/>
</dbReference>
<dbReference type="InterPro" id="IPR023346">
    <property type="entry name" value="Lysozyme-like_dom_sf"/>
</dbReference>
<dbReference type="InterPro" id="IPR036950">
    <property type="entry name" value="PBP_transglycosylase"/>
</dbReference>
<dbReference type="InterPro" id="IPR011812">
    <property type="entry name" value="Pep_trsgly"/>
</dbReference>
<dbReference type="NCBIfam" id="TIGR02070">
    <property type="entry name" value="mono_pep_trsgly"/>
    <property type="match status" value="1"/>
</dbReference>
<dbReference type="PANTHER" id="PTHR30400:SF0">
    <property type="entry name" value="BIOSYNTHETIC PEPTIDOGLYCAN TRANSGLYCOSYLASE"/>
    <property type="match status" value="1"/>
</dbReference>
<dbReference type="PANTHER" id="PTHR30400">
    <property type="entry name" value="MONOFUNCTIONAL BIOSYNTHETIC PEPTIDOGLYCAN TRANSGLYCOSYLASE"/>
    <property type="match status" value="1"/>
</dbReference>
<dbReference type="Pfam" id="PF00912">
    <property type="entry name" value="Transgly"/>
    <property type="match status" value="1"/>
</dbReference>
<dbReference type="SUPFAM" id="SSF53955">
    <property type="entry name" value="Lysozyme-like"/>
    <property type="match status" value="1"/>
</dbReference>
<accession>Q1R6C6</accession>
<reference key="1">
    <citation type="journal article" date="2006" name="Proc. Natl. Acad. Sci. U.S.A.">
        <title>Identification of genes subject to positive selection in uropathogenic strains of Escherichia coli: a comparative genomics approach.</title>
        <authorList>
            <person name="Chen S.L."/>
            <person name="Hung C.-S."/>
            <person name="Xu J."/>
            <person name="Reigstad C.S."/>
            <person name="Magrini V."/>
            <person name="Sabo A."/>
            <person name="Blasiar D."/>
            <person name="Bieri T."/>
            <person name="Meyer R.R."/>
            <person name="Ozersky P."/>
            <person name="Armstrong J.R."/>
            <person name="Fulton R.S."/>
            <person name="Latreille J.P."/>
            <person name="Spieth J."/>
            <person name="Hooton T.M."/>
            <person name="Mardis E.R."/>
            <person name="Hultgren S.J."/>
            <person name="Gordon J.I."/>
        </authorList>
    </citation>
    <scope>NUCLEOTIDE SEQUENCE [LARGE SCALE GENOMIC DNA]</scope>
    <source>
        <strain>UTI89 / UPEC</strain>
    </source>
</reference>
<protein>
    <recommendedName>
        <fullName evidence="1">Biosynthetic peptidoglycan transglycosylase</fullName>
        <ecNumber evidence="1">2.4.99.28</ecNumber>
    </recommendedName>
    <alternativeName>
        <fullName evidence="1">Glycan polymerase</fullName>
    </alternativeName>
    <alternativeName>
        <fullName evidence="1">Peptidoglycan glycosyltransferase MtgA</fullName>
        <shortName evidence="1">PGT</shortName>
    </alternativeName>
</protein>